<sequence length="386" mass="44679">MLIIFLFFYFCYGFNEPLNVVSHLNHDWFLFGDSRSDCNHINNLKIKNFDYLDIHPSLCNNGKISSSAGDSIFKSFHFTRFYNYTGEGDQIIFYEGVNFNPYHRFKCFPNGSNDVWLLNKVRFYRALYSNMAFFRYLTFVDIPYNVSLSKFNSCKSDILSLNNPIFINYSKEVYFTLLGCSLYLVPLCLFKSNFSQYYYNIDTGSVYGFSNVVYPDLDCIYISLKPGSYKVSTTAPFLSLPTKALCFDKSKQFVPVQVVDSRWNNERASDISLSVACQLPYCYFRNSSANYVGKYDINHGDSGFISILSGLLYNVSCISYYGVFLYDNFTSIWPYYSFGRCPTSSIIKHPICVYDFLPIILQGILLCLALLFVVFLLFLLYNDKSH</sequence>
<comment type="function">
    <text evidence="1">Structural protein that makes short spikes at the surface of the virus. Contains receptor binding and receptor-destroying activities. Mediates de-O-acetylation of N-acetyl-4-O-acetylneuraminic acid, which is probably the receptor determinant recognized by the virus on the surface of erythrocytes and susceptible cells. This receptor-destroying activity is important for virus release as it probably helps preventing self-aggregation and ensures the efficient spread of the progeny virus from cell to cell. May serve as a secondary viral attachment protein for initiating infection, the spike protein being the major one. May become a target for both the humoral and the cellular branches of the immune system.</text>
</comment>
<comment type="catalytic activity">
    <reaction evidence="1">
        <text>N-acetyl-9-O-acetylneuraminate + H2O = N-acetylneuraminate + acetate + H(+)</text>
        <dbReference type="Rhea" id="RHEA:22600"/>
        <dbReference type="ChEBI" id="CHEBI:15377"/>
        <dbReference type="ChEBI" id="CHEBI:15378"/>
        <dbReference type="ChEBI" id="CHEBI:28999"/>
        <dbReference type="ChEBI" id="CHEBI:30089"/>
        <dbReference type="ChEBI" id="CHEBI:35418"/>
        <dbReference type="EC" id="3.1.1.53"/>
    </reaction>
</comment>
<comment type="catalytic activity">
    <reaction evidence="1">
        <text>N-acetyl-4-O-acetylneuraminate + H2O = N-acetylneuraminate + acetate + H(+)</text>
        <dbReference type="Rhea" id="RHEA:25564"/>
        <dbReference type="ChEBI" id="CHEBI:15377"/>
        <dbReference type="ChEBI" id="CHEBI:15378"/>
        <dbReference type="ChEBI" id="CHEBI:29006"/>
        <dbReference type="ChEBI" id="CHEBI:30089"/>
        <dbReference type="ChEBI" id="CHEBI:35418"/>
        <dbReference type="EC" id="3.1.1.53"/>
    </reaction>
</comment>
<comment type="subunit">
    <text evidence="1">Homodimer; disulfide-linked. Forms a complex with the M protein in the pre-Golgi. Associates then with S-M complex to form a ternary complex S-M-HE.</text>
</comment>
<comment type="subcellular location">
    <subcellularLocation>
        <location evidence="1">Virion membrane</location>
        <topology evidence="1">Single-pass type I membrane protein</topology>
    </subcellularLocation>
    <subcellularLocation>
        <location evidence="1">Host cell membrane</location>
        <topology evidence="1">Single-pass type I membrane protein</topology>
    </subcellularLocation>
    <text evidence="1">In infected cells becomes incorporated into the envelope of virions during virus assembly at the endoplasmic reticulum and cis Golgi. However, some may escape incorporation into virions and subsequently migrate to the cell surface.</text>
</comment>
<comment type="PTM">
    <text evidence="1">N-glycosylated in the host RER.</text>
</comment>
<comment type="miscellaneous">
    <text>Isolate N1 belongs to genotype A.</text>
</comment>
<comment type="similarity">
    <text evidence="1">Belongs to the influenza type C/coronaviruses hemagglutinin-esterase family.</text>
</comment>
<evidence type="ECO:0000255" key="1">
    <source>
        <dbReference type="HAMAP-Rule" id="MF_04207"/>
    </source>
</evidence>
<evidence type="ECO:0007829" key="2">
    <source>
        <dbReference type="PDB" id="6Y3Y"/>
    </source>
</evidence>
<proteinExistence type="evidence at protein level"/>
<organismHost>
    <name type="scientific">Homo sapiens</name>
    <name type="common">Human</name>
    <dbReference type="NCBI Taxonomy" id="9606"/>
</organismHost>
<reference key="1">
    <citation type="journal article" date="2005" name="J. Virol.">
        <title>Characterization and complete genome sequence of a novel coronavirus, coronavirus HKU1, from patients with pneumonia.</title>
        <authorList>
            <person name="Woo P.C.Y."/>
            <person name="Lau S.K.P."/>
            <person name="Chu C.-M."/>
            <person name="Chan K.-H."/>
            <person name="Tsoi H.-W."/>
            <person name="Huang Y."/>
            <person name="Wong B.H.L."/>
            <person name="Poon R.W.S."/>
            <person name="Cai J.J."/>
            <person name="Luk W.-K."/>
            <person name="Poon L.L.M."/>
            <person name="Wong S.S.Y."/>
            <person name="Guan Y."/>
            <person name="Peiris J.S.M."/>
            <person name="Yuen K.-Y."/>
        </authorList>
    </citation>
    <scope>NUCLEOTIDE SEQUENCE [GENOMIC RNA]</scope>
</reference>
<gene>
    <name evidence="1" type="primary">HE</name>
    <name type="ORF">2</name>
</gene>
<feature type="signal peptide" evidence="1">
    <location>
        <begin position="1"/>
        <end position="11"/>
    </location>
</feature>
<feature type="chain" id="PRO_0000297761" description="Hemagglutinin-esterase" evidence="1">
    <location>
        <begin position="12"/>
        <end position="386"/>
    </location>
</feature>
<feature type="topological domain" description="Virion surface" evidence="1">
    <location>
        <begin position="12"/>
        <end position="359"/>
    </location>
</feature>
<feature type="transmembrane region" description="Helical" evidence="1">
    <location>
        <begin position="360"/>
        <end position="380"/>
    </location>
</feature>
<feature type="topological domain" description="Intravirion" evidence="1">
    <location>
        <begin position="381"/>
        <end position="386"/>
    </location>
</feature>
<feature type="region of interest" description="Esterase domain 1" evidence="1">
    <location>
        <begin position="1"/>
        <end position="121"/>
    </location>
</feature>
<feature type="region of interest" description="Receptor binding" evidence="1">
    <location>
        <begin position="122"/>
        <end position="236"/>
    </location>
</feature>
<feature type="region of interest" description="Esterase domain 2" evidence="1">
    <location>
        <begin position="237"/>
        <end position="349"/>
    </location>
</feature>
<feature type="active site" description="Nucleophile" evidence="1">
    <location>
        <position position="34"/>
    </location>
</feature>
<feature type="active site" description="Charge relay system" evidence="1">
    <location>
        <position position="296"/>
    </location>
</feature>
<feature type="active site" description="Charge relay system" evidence="1">
    <location>
        <position position="299"/>
    </location>
</feature>
<feature type="glycosylation site" description="N-linked (GlcNAc...) asparagine; by host" evidence="1">
    <location>
        <position position="83"/>
    </location>
</feature>
<feature type="glycosylation site" description="N-linked (GlcNAc...) asparagine; by host" evidence="1">
    <location>
        <position position="110"/>
    </location>
</feature>
<feature type="glycosylation site" description="N-linked (GlcNAc...) asparagine; by host" evidence="1">
    <location>
        <position position="145"/>
    </location>
</feature>
<feature type="glycosylation site" description="N-linked (GlcNAc...) asparagine; by host" evidence="1">
    <location>
        <position position="168"/>
    </location>
</feature>
<feature type="glycosylation site" description="N-linked (GlcNAc...) asparagine; by host" evidence="1">
    <location>
        <position position="286"/>
    </location>
</feature>
<feature type="glycosylation site" description="N-linked (GlcNAc...) asparagine; by host" evidence="1">
    <location>
        <position position="328"/>
    </location>
</feature>
<feature type="disulfide bond" evidence="1">
    <location>
        <begin position="38"/>
        <end position="59"/>
    </location>
</feature>
<feature type="disulfide bond" evidence="1">
    <location>
        <begin position="107"/>
        <end position="154"/>
    </location>
</feature>
<feature type="disulfide bond" evidence="1">
    <location>
        <begin position="180"/>
        <end position="246"/>
    </location>
</feature>
<feature type="disulfide bond" evidence="1">
    <location>
        <begin position="188"/>
        <end position="219"/>
    </location>
</feature>
<feature type="disulfide bond" evidence="1">
    <location>
        <begin position="277"/>
        <end position="282"/>
    </location>
</feature>
<feature type="disulfide bond" evidence="1">
    <location>
        <begin position="317"/>
        <end position="341"/>
    </location>
</feature>
<feature type="strand" evidence="2">
    <location>
        <begin position="23"/>
        <end position="26"/>
    </location>
</feature>
<feature type="strand" evidence="2">
    <location>
        <begin position="28"/>
        <end position="31"/>
    </location>
</feature>
<feature type="helix" evidence="2">
    <location>
        <begin position="34"/>
        <end position="36"/>
    </location>
</feature>
<feature type="helix" evidence="2">
    <location>
        <begin position="41"/>
        <end position="43"/>
    </location>
</feature>
<feature type="helix" evidence="2">
    <location>
        <begin position="72"/>
        <end position="77"/>
    </location>
</feature>
<feature type="strand" evidence="2">
    <location>
        <begin position="78"/>
        <end position="80"/>
    </location>
</feature>
<feature type="strand" evidence="2">
    <location>
        <begin position="85"/>
        <end position="87"/>
    </location>
</feature>
<feature type="strand" evidence="2">
    <location>
        <begin position="89"/>
        <end position="93"/>
    </location>
</feature>
<feature type="helix" evidence="2">
    <location>
        <begin position="114"/>
        <end position="131"/>
    </location>
</feature>
<feature type="strand" evidence="2">
    <location>
        <begin position="136"/>
        <end position="141"/>
    </location>
</feature>
<feature type="strand" evidence="2">
    <location>
        <begin position="163"/>
        <end position="168"/>
    </location>
</feature>
<feature type="strand" evidence="2">
    <location>
        <begin position="173"/>
        <end position="176"/>
    </location>
</feature>
<feature type="strand" evidence="2">
    <location>
        <begin position="179"/>
        <end position="191"/>
    </location>
</feature>
<feature type="strand" evidence="2">
    <location>
        <begin position="200"/>
        <end position="203"/>
    </location>
</feature>
<feature type="strand" evidence="2">
    <location>
        <begin position="205"/>
        <end position="209"/>
    </location>
</feature>
<feature type="strand" evidence="2">
    <location>
        <begin position="218"/>
        <end position="222"/>
    </location>
</feature>
<feature type="strand" evidence="2">
    <location>
        <begin position="226"/>
        <end position="232"/>
    </location>
</feature>
<feature type="strand" evidence="2">
    <location>
        <begin position="235"/>
        <end position="240"/>
    </location>
</feature>
<feature type="strand" evidence="2">
    <location>
        <begin position="242"/>
        <end position="249"/>
    </location>
</feature>
<feature type="strand" evidence="2">
    <location>
        <begin position="256"/>
        <end position="259"/>
    </location>
</feature>
<feature type="helix" evidence="2">
    <location>
        <begin position="272"/>
        <end position="275"/>
    </location>
</feature>
<feature type="strand" evidence="2">
    <location>
        <begin position="279"/>
        <end position="285"/>
    </location>
</feature>
<feature type="strand" evidence="2">
    <location>
        <begin position="294"/>
        <end position="296"/>
    </location>
</feature>
<feature type="helix" evidence="2">
    <location>
        <begin position="302"/>
        <end position="308"/>
    </location>
</feature>
<feature type="helix" evidence="2">
    <location>
        <begin position="309"/>
        <end position="312"/>
    </location>
</feature>
<feature type="strand" evidence="2">
    <location>
        <begin position="316"/>
        <end position="318"/>
    </location>
</feature>
<feature type="strand" evidence="2">
    <location>
        <begin position="323"/>
        <end position="325"/>
    </location>
</feature>
<feature type="strand" evidence="2">
    <location>
        <begin position="327"/>
        <end position="329"/>
    </location>
</feature>
<organism>
    <name type="scientific">Human coronavirus HKU1 (isolate N1)</name>
    <name type="common">HCoV-HKU1</name>
    <dbReference type="NCBI Taxonomy" id="443239"/>
    <lineage>
        <taxon>Viruses</taxon>
        <taxon>Riboviria</taxon>
        <taxon>Orthornavirae</taxon>
        <taxon>Pisuviricota</taxon>
        <taxon>Pisoniviricetes</taxon>
        <taxon>Nidovirales</taxon>
        <taxon>Cornidovirineae</taxon>
        <taxon>Coronaviridae</taxon>
        <taxon>Orthocoronavirinae</taxon>
        <taxon>Betacoronavirus</taxon>
        <taxon>Embecovirus</taxon>
        <taxon>Human coronavirus HKU1</taxon>
    </lineage>
</organism>
<name>HEMA_CVHN1</name>
<keyword id="KW-0002">3D-structure</keyword>
<keyword id="KW-1015">Disulfide bond</keyword>
<keyword id="KW-0325">Glycoprotein</keyword>
<keyword id="KW-0348">Hemagglutinin</keyword>
<keyword id="KW-1032">Host cell membrane</keyword>
<keyword id="KW-1043">Host membrane</keyword>
<keyword id="KW-0378">Hydrolase</keyword>
<keyword id="KW-0472">Membrane</keyword>
<keyword id="KW-0732">Signal</keyword>
<keyword id="KW-0812">Transmembrane</keyword>
<keyword id="KW-1133">Transmembrane helix</keyword>
<keyword id="KW-0261">Viral envelope protein</keyword>
<keyword id="KW-0946">Virion</keyword>
<accession>Q5MQD1</accession>
<protein>
    <recommendedName>
        <fullName evidence="1">Hemagglutinin-esterase</fullName>
        <shortName evidence="1">HE protein</shortName>
        <ecNumber evidence="1">3.1.1.53</ecNumber>
    </recommendedName>
    <alternativeName>
        <fullName evidence="1">E3 glycoprotein</fullName>
    </alternativeName>
</protein>
<dbReference type="EC" id="3.1.1.53" evidence="1"/>
<dbReference type="EMBL" id="AY597011">
    <property type="protein sequence ID" value="AAT98579.1"/>
    <property type="molecule type" value="Genomic_RNA"/>
</dbReference>
<dbReference type="RefSeq" id="YP_173237.1">
    <property type="nucleotide sequence ID" value="NC_006577.2"/>
</dbReference>
<dbReference type="PDB" id="6Y3Y">
    <property type="method" value="EM"/>
    <property type="resolution" value="3.39 A"/>
    <property type="chains" value="A/B=14-355"/>
</dbReference>
<dbReference type="PDBsum" id="6Y3Y"/>
<dbReference type="EMDB" id="EMD-10676"/>
<dbReference type="SMR" id="Q5MQD1"/>
<dbReference type="GlyCosmos" id="Q5MQD1">
    <property type="glycosylation" value="6 sites, No reported glycans"/>
</dbReference>
<dbReference type="DNASU" id="3200425"/>
<dbReference type="GeneID" id="3200425"/>
<dbReference type="KEGG" id="vg:3200425"/>
<dbReference type="Proteomes" id="UP000008170">
    <property type="component" value="Segment"/>
</dbReference>
<dbReference type="GO" id="GO:0020002">
    <property type="term" value="C:host cell plasma membrane"/>
    <property type="evidence" value="ECO:0007669"/>
    <property type="project" value="UniProtKB-SubCell"/>
</dbReference>
<dbReference type="GO" id="GO:0016020">
    <property type="term" value="C:membrane"/>
    <property type="evidence" value="ECO:0007669"/>
    <property type="project" value="UniProtKB-UniRule"/>
</dbReference>
<dbReference type="GO" id="GO:0019031">
    <property type="term" value="C:viral envelope"/>
    <property type="evidence" value="ECO:0007669"/>
    <property type="project" value="UniProtKB-UniRule"/>
</dbReference>
<dbReference type="GO" id="GO:0055036">
    <property type="term" value="C:virion membrane"/>
    <property type="evidence" value="ECO:0007669"/>
    <property type="project" value="UniProtKB-SubCell"/>
</dbReference>
<dbReference type="GO" id="GO:0046789">
    <property type="term" value="F:host cell surface receptor binding"/>
    <property type="evidence" value="ECO:0007669"/>
    <property type="project" value="UniProtKB-UniRule"/>
</dbReference>
<dbReference type="GO" id="GO:0106331">
    <property type="term" value="F:sialate 4-O-acetylesterase activity"/>
    <property type="evidence" value="ECO:0007669"/>
    <property type="project" value="RHEA"/>
</dbReference>
<dbReference type="GO" id="GO:0106330">
    <property type="term" value="F:sialate 9-O-acetylesterase activity"/>
    <property type="evidence" value="ECO:0007669"/>
    <property type="project" value="RHEA"/>
</dbReference>
<dbReference type="GO" id="GO:0001681">
    <property type="term" value="F:sialate O-acetylesterase activity"/>
    <property type="evidence" value="ECO:0000250"/>
    <property type="project" value="UniProtKB"/>
</dbReference>
<dbReference type="GO" id="GO:0019064">
    <property type="term" value="P:fusion of virus membrane with host plasma membrane"/>
    <property type="evidence" value="ECO:0007669"/>
    <property type="project" value="UniProtKB-UniRule"/>
</dbReference>
<dbReference type="HAMAP" id="MF_04207">
    <property type="entry name" value="BETA_CORONA_HE"/>
    <property type="match status" value="1"/>
</dbReference>
<dbReference type="InterPro" id="IPR008980">
    <property type="entry name" value="Capsid_hemagglutn"/>
</dbReference>
<dbReference type="InterPro" id="IPR042545">
    <property type="entry name" value="HEMA"/>
</dbReference>
<dbReference type="InterPro" id="IPR007142">
    <property type="entry name" value="Hemagglutn-estrase_core"/>
</dbReference>
<dbReference type="InterPro" id="IPR003860">
    <property type="entry name" value="Hemagglutn-estrase_hemagglutn"/>
</dbReference>
<dbReference type="Pfam" id="PF03996">
    <property type="entry name" value="Hema_esterase"/>
    <property type="match status" value="1"/>
</dbReference>
<dbReference type="Pfam" id="PF02710">
    <property type="entry name" value="Hema_HEFG"/>
    <property type="match status" value="1"/>
</dbReference>
<dbReference type="SUPFAM" id="SSF52266">
    <property type="entry name" value="SGNH hydrolase"/>
    <property type="match status" value="1"/>
</dbReference>
<dbReference type="SUPFAM" id="SSF49818">
    <property type="entry name" value="Viral protein domain"/>
    <property type="match status" value="1"/>
</dbReference>